<keyword id="KW-0007">Acetylation</keyword>
<keyword id="KW-0648">Protein biosynthesis</keyword>
<keyword id="KW-0810">Translation regulation</keyword>
<name>SUI1_BRAOL</name>
<accession>Q9SQF4</accession>
<protein>
    <recommendedName>
        <fullName>Protein translation factor SUI1 homolog</fullName>
    </recommendedName>
    <alternativeName>
        <fullName>Translation initiation factor nps45</fullName>
    </alternativeName>
</protein>
<sequence length="113" mass="12593">MSELDSQVPTAFDPFADANAEDSGAGTKEYVHIRVQQRNGRKSLTTVQGLKKEYSYTKILKDLKKEFCCNGTVVQDSELGQVIQLQGDQRKNVSTFLVQAGLVKKDDIQIHGF</sequence>
<organism>
    <name type="scientific">Brassica oleracea</name>
    <name type="common">Wild cabbage</name>
    <dbReference type="NCBI Taxonomy" id="3712"/>
    <lineage>
        <taxon>Eukaryota</taxon>
        <taxon>Viridiplantae</taxon>
        <taxon>Streptophyta</taxon>
        <taxon>Embryophyta</taxon>
        <taxon>Tracheophyta</taxon>
        <taxon>Spermatophyta</taxon>
        <taxon>Magnoliopsida</taxon>
        <taxon>eudicotyledons</taxon>
        <taxon>Gunneridae</taxon>
        <taxon>Pentapetalae</taxon>
        <taxon>rosids</taxon>
        <taxon>malvids</taxon>
        <taxon>Brassicales</taxon>
        <taxon>Brassicaceae</taxon>
        <taxon>Brassiceae</taxon>
        <taxon>Brassica</taxon>
    </lineage>
</organism>
<proteinExistence type="inferred from homology"/>
<comment type="function">
    <text>Probably involved in translation.</text>
</comment>
<comment type="similarity">
    <text evidence="3">Belongs to the SUI1 family.</text>
</comment>
<evidence type="ECO:0000250" key="1">
    <source>
        <dbReference type="UniProtKB" id="P41568"/>
    </source>
</evidence>
<evidence type="ECO:0000256" key="2">
    <source>
        <dbReference type="SAM" id="MobiDB-lite"/>
    </source>
</evidence>
<evidence type="ECO:0000305" key="3"/>
<feature type="initiator methionine" description="Removed" evidence="1">
    <location>
        <position position="1"/>
    </location>
</feature>
<feature type="chain" id="PRO_0000130569" description="Protein translation factor SUI1 homolog">
    <location>
        <begin position="2"/>
        <end position="113"/>
    </location>
</feature>
<feature type="region of interest" description="Disordered" evidence="2">
    <location>
        <begin position="1"/>
        <end position="24"/>
    </location>
</feature>
<feature type="modified residue" description="N-acetylserine" evidence="1">
    <location>
        <position position="2"/>
    </location>
</feature>
<reference key="1">
    <citation type="submission" date="1998-10" db="EMBL/GenBank/DDBJ databases">
        <title>Cloning and characterization of a translation initiation factor involved in the Brassica oleracea/Xanthomonas campestris pv. campestris interaction.</title>
        <authorList>
            <person name="Abdullah M.T."/>
            <person name="Tuzun S."/>
            <person name="Singh N.P."/>
        </authorList>
    </citation>
    <scope>NUCLEOTIDE SEQUENCE [MRNA]</scope>
</reference>
<dbReference type="EMBL" id="AF098672">
    <property type="protein sequence ID" value="AAF04624.1"/>
    <property type="molecule type" value="mRNA"/>
</dbReference>
<dbReference type="SMR" id="Q9SQF4"/>
<dbReference type="GO" id="GO:0003743">
    <property type="term" value="F:translation initiation factor activity"/>
    <property type="evidence" value="ECO:0007669"/>
    <property type="project" value="InterPro"/>
</dbReference>
<dbReference type="GO" id="GO:0006417">
    <property type="term" value="P:regulation of translation"/>
    <property type="evidence" value="ECO:0007669"/>
    <property type="project" value="UniProtKB-KW"/>
</dbReference>
<dbReference type="CDD" id="cd11566">
    <property type="entry name" value="eIF1_SUI1"/>
    <property type="match status" value="1"/>
</dbReference>
<dbReference type="FunFam" id="3.30.780.10:FF:000001">
    <property type="entry name" value="Eukaryotic translation initiation factor SUI1"/>
    <property type="match status" value="1"/>
</dbReference>
<dbReference type="Gene3D" id="3.30.780.10">
    <property type="entry name" value="SUI1-like domain"/>
    <property type="match status" value="1"/>
</dbReference>
<dbReference type="InterPro" id="IPR001950">
    <property type="entry name" value="SUI1"/>
</dbReference>
<dbReference type="InterPro" id="IPR036877">
    <property type="entry name" value="SUI1_dom_sf"/>
</dbReference>
<dbReference type="InterPro" id="IPR005874">
    <property type="entry name" value="SUI1_euk"/>
</dbReference>
<dbReference type="NCBIfam" id="TIGR01160">
    <property type="entry name" value="SUI1_MOF2"/>
    <property type="match status" value="1"/>
</dbReference>
<dbReference type="PANTHER" id="PTHR10388">
    <property type="entry name" value="EUKARYOTIC TRANSLATION INITIATION FACTOR SUI1"/>
    <property type="match status" value="1"/>
</dbReference>
<dbReference type="Pfam" id="PF01253">
    <property type="entry name" value="SUI1"/>
    <property type="match status" value="1"/>
</dbReference>
<dbReference type="PIRSF" id="PIRSF004499">
    <property type="entry name" value="SUI1_euk"/>
    <property type="match status" value="1"/>
</dbReference>
<dbReference type="SUPFAM" id="SSF55159">
    <property type="entry name" value="eIF1-like"/>
    <property type="match status" value="1"/>
</dbReference>
<dbReference type="PROSITE" id="PS50296">
    <property type="entry name" value="SUI1"/>
    <property type="match status" value="1"/>
</dbReference>